<gene>
    <name type="ordered locus">Sde_3146</name>
</gene>
<accession>Q21FX6</accession>
<dbReference type="EMBL" id="CP000282">
    <property type="protein sequence ID" value="ABD82403.1"/>
    <property type="molecule type" value="Genomic_DNA"/>
</dbReference>
<dbReference type="RefSeq" id="WP_011469619.1">
    <property type="nucleotide sequence ID" value="NC_007912.1"/>
</dbReference>
<dbReference type="SMR" id="Q21FX6"/>
<dbReference type="STRING" id="203122.Sde_3146"/>
<dbReference type="GeneID" id="98614774"/>
<dbReference type="KEGG" id="sde:Sde_3146"/>
<dbReference type="eggNOG" id="COG0792">
    <property type="taxonomic scope" value="Bacteria"/>
</dbReference>
<dbReference type="HOGENOM" id="CLU_115353_1_0_6"/>
<dbReference type="OrthoDB" id="9794876at2"/>
<dbReference type="Proteomes" id="UP000001947">
    <property type="component" value="Chromosome"/>
</dbReference>
<dbReference type="GO" id="GO:0003676">
    <property type="term" value="F:nucleic acid binding"/>
    <property type="evidence" value="ECO:0007669"/>
    <property type="project" value="InterPro"/>
</dbReference>
<dbReference type="CDD" id="cd20736">
    <property type="entry name" value="PoNe_Nuclease"/>
    <property type="match status" value="1"/>
</dbReference>
<dbReference type="Gene3D" id="3.40.1350.10">
    <property type="match status" value="1"/>
</dbReference>
<dbReference type="HAMAP" id="MF_00048">
    <property type="entry name" value="UPF0102"/>
    <property type="match status" value="1"/>
</dbReference>
<dbReference type="InterPro" id="IPR011335">
    <property type="entry name" value="Restrct_endonuc-II-like"/>
</dbReference>
<dbReference type="InterPro" id="IPR011856">
    <property type="entry name" value="tRNA_endonuc-like_dom_sf"/>
</dbReference>
<dbReference type="InterPro" id="IPR003509">
    <property type="entry name" value="UPF0102_YraN-like"/>
</dbReference>
<dbReference type="NCBIfam" id="NF009150">
    <property type="entry name" value="PRK12497.1-3"/>
    <property type="match status" value="1"/>
</dbReference>
<dbReference type="NCBIfam" id="TIGR00252">
    <property type="entry name" value="YraN family protein"/>
    <property type="match status" value="1"/>
</dbReference>
<dbReference type="PANTHER" id="PTHR34039">
    <property type="entry name" value="UPF0102 PROTEIN YRAN"/>
    <property type="match status" value="1"/>
</dbReference>
<dbReference type="PANTHER" id="PTHR34039:SF1">
    <property type="entry name" value="UPF0102 PROTEIN YRAN"/>
    <property type="match status" value="1"/>
</dbReference>
<dbReference type="Pfam" id="PF02021">
    <property type="entry name" value="UPF0102"/>
    <property type="match status" value="1"/>
</dbReference>
<dbReference type="SUPFAM" id="SSF52980">
    <property type="entry name" value="Restriction endonuclease-like"/>
    <property type="match status" value="1"/>
</dbReference>
<organism>
    <name type="scientific">Saccharophagus degradans (strain 2-40 / ATCC 43961 / DSM 17024)</name>
    <dbReference type="NCBI Taxonomy" id="203122"/>
    <lineage>
        <taxon>Bacteria</taxon>
        <taxon>Pseudomonadati</taxon>
        <taxon>Pseudomonadota</taxon>
        <taxon>Gammaproteobacteria</taxon>
        <taxon>Cellvibrionales</taxon>
        <taxon>Cellvibrionaceae</taxon>
        <taxon>Saccharophagus</taxon>
    </lineage>
</organism>
<feature type="chain" id="PRO_1000009252" description="UPF0102 protein Sde_3146">
    <location>
        <begin position="1"/>
        <end position="118"/>
    </location>
</feature>
<protein>
    <recommendedName>
        <fullName evidence="1">UPF0102 protein Sde_3146</fullName>
    </recommendedName>
</protein>
<proteinExistence type="inferred from homology"/>
<evidence type="ECO:0000255" key="1">
    <source>
        <dbReference type="HAMAP-Rule" id="MF_00048"/>
    </source>
</evidence>
<name>Y3146_SACD2</name>
<reference key="1">
    <citation type="journal article" date="2008" name="PLoS Genet.">
        <title>Complete genome sequence of the complex carbohydrate-degrading marine bacterium, Saccharophagus degradans strain 2-40 T.</title>
        <authorList>
            <person name="Weiner R.M."/>
            <person name="Taylor L.E. II"/>
            <person name="Henrissat B."/>
            <person name="Hauser L."/>
            <person name="Land M."/>
            <person name="Coutinho P.M."/>
            <person name="Rancurel C."/>
            <person name="Saunders E.H."/>
            <person name="Longmire A.G."/>
            <person name="Zhang H."/>
            <person name="Bayer E.A."/>
            <person name="Gilbert H.J."/>
            <person name="Larimer F."/>
            <person name="Zhulin I.B."/>
            <person name="Ekborg N.A."/>
            <person name="Lamed R."/>
            <person name="Richardson P.M."/>
            <person name="Borovok I."/>
            <person name="Hutcheson S."/>
        </authorList>
    </citation>
    <scope>NUCLEOTIDE SEQUENCE [LARGE SCALE GENOMIC DNA]</scope>
    <source>
        <strain>2-40 / ATCC 43961 / DSM 17024</strain>
    </source>
</reference>
<keyword id="KW-1185">Reference proteome</keyword>
<sequence>MAKHNETGTQAEILAEQHLVSQGLTPLARNYHCKGGEIDLIMQQQRALVFVEVRFRKSAAFGSAAASVTRSKQQKIVTAAQHFLMDNSKLANLPCRFDVVAITAGQIEWIENAFTLNE</sequence>
<comment type="similarity">
    <text evidence="1">Belongs to the UPF0102 family.</text>
</comment>